<comment type="function">
    <text evidence="1">Forms part of the ribosomal stalk which helps the ribosome interact with GTP-bound translation factors.</text>
</comment>
<comment type="subunit">
    <text evidence="1">Part of the ribosomal stalk of the 50S ribosomal subunit. Interacts with L10 and the large rRNA to form the base of the stalk. L10 forms an elongated spine to which L12 dimers bind in a sequential fashion forming a multimeric L10(L12)X complex.</text>
</comment>
<comment type="PTM">
    <text evidence="1">One or more lysine residues are methylated.</text>
</comment>
<comment type="similarity">
    <text evidence="1">Belongs to the universal ribosomal protein uL11 family.</text>
</comment>
<sequence length="142" mass="14875">MAKKVQAYVKLQVAAGMANPSPPVGPALGQQGVNIMEFCKAFNAKTDSIEKGLPIPVVITVYADRSFTFVTKTPPAAVLLKKAAGIKSGSGKPNKDKVGKISRAQLQEIAQTKAADMTGADIEAMTRSIEGTARSMGLVVED</sequence>
<dbReference type="EMBL" id="CP000946">
    <property type="protein sequence ID" value="ACA79641.1"/>
    <property type="molecule type" value="Genomic_DNA"/>
</dbReference>
<dbReference type="RefSeq" id="WP_001085926.1">
    <property type="nucleotide sequence ID" value="NZ_MTFT01000025.1"/>
</dbReference>
<dbReference type="SMR" id="B1IUR4"/>
<dbReference type="GeneID" id="93777911"/>
<dbReference type="KEGG" id="ecl:EcolC_4042"/>
<dbReference type="HOGENOM" id="CLU_074237_2_0_6"/>
<dbReference type="GO" id="GO:0022625">
    <property type="term" value="C:cytosolic large ribosomal subunit"/>
    <property type="evidence" value="ECO:0007669"/>
    <property type="project" value="TreeGrafter"/>
</dbReference>
<dbReference type="GO" id="GO:0070180">
    <property type="term" value="F:large ribosomal subunit rRNA binding"/>
    <property type="evidence" value="ECO:0007669"/>
    <property type="project" value="UniProtKB-UniRule"/>
</dbReference>
<dbReference type="GO" id="GO:0003735">
    <property type="term" value="F:structural constituent of ribosome"/>
    <property type="evidence" value="ECO:0007669"/>
    <property type="project" value="InterPro"/>
</dbReference>
<dbReference type="GO" id="GO:0006412">
    <property type="term" value="P:translation"/>
    <property type="evidence" value="ECO:0007669"/>
    <property type="project" value="UniProtKB-UniRule"/>
</dbReference>
<dbReference type="CDD" id="cd00349">
    <property type="entry name" value="Ribosomal_L11"/>
    <property type="match status" value="1"/>
</dbReference>
<dbReference type="FunFam" id="1.10.10.250:FF:000001">
    <property type="entry name" value="50S ribosomal protein L11"/>
    <property type="match status" value="1"/>
</dbReference>
<dbReference type="FunFam" id="3.30.1550.10:FF:000001">
    <property type="entry name" value="50S ribosomal protein L11"/>
    <property type="match status" value="1"/>
</dbReference>
<dbReference type="Gene3D" id="1.10.10.250">
    <property type="entry name" value="Ribosomal protein L11, C-terminal domain"/>
    <property type="match status" value="1"/>
</dbReference>
<dbReference type="Gene3D" id="3.30.1550.10">
    <property type="entry name" value="Ribosomal protein L11/L12, N-terminal domain"/>
    <property type="match status" value="1"/>
</dbReference>
<dbReference type="HAMAP" id="MF_00736">
    <property type="entry name" value="Ribosomal_uL11"/>
    <property type="match status" value="1"/>
</dbReference>
<dbReference type="InterPro" id="IPR000911">
    <property type="entry name" value="Ribosomal_uL11"/>
</dbReference>
<dbReference type="InterPro" id="IPR006519">
    <property type="entry name" value="Ribosomal_uL11_bac-typ"/>
</dbReference>
<dbReference type="InterPro" id="IPR020783">
    <property type="entry name" value="Ribosomal_uL11_C"/>
</dbReference>
<dbReference type="InterPro" id="IPR036769">
    <property type="entry name" value="Ribosomal_uL11_C_sf"/>
</dbReference>
<dbReference type="InterPro" id="IPR020785">
    <property type="entry name" value="Ribosomal_uL11_CS"/>
</dbReference>
<dbReference type="InterPro" id="IPR020784">
    <property type="entry name" value="Ribosomal_uL11_N"/>
</dbReference>
<dbReference type="InterPro" id="IPR036796">
    <property type="entry name" value="Ribosomal_uL11_N_sf"/>
</dbReference>
<dbReference type="NCBIfam" id="TIGR01632">
    <property type="entry name" value="L11_bact"/>
    <property type="match status" value="1"/>
</dbReference>
<dbReference type="PANTHER" id="PTHR11661">
    <property type="entry name" value="60S RIBOSOMAL PROTEIN L12"/>
    <property type="match status" value="1"/>
</dbReference>
<dbReference type="PANTHER" id="PTHR11661:SF1">
    <property type="entry name" value="LARGE RIBOSOMAL SUBUNIT PROTEIN UL11M"/>
    <property type="match status" value="1"/>
</dbReference>
<dbReference type="Pfam" id="PF00298">
    <property type="entry name" value="Ribosomal_L11"/>
    <property type="match status" value="1"/>
</dbReference>
<dbReference type="Pfam" id="PF03946">
    <property type="entry name" value="Ribosomal_L11_N"/>
    <property type="match status" value="1"/>
</dbReference>
<dbReference type="SMART" id="SM00649">
    <property type="entry name" value="RL11"/>
    <property type="match status" value="1"/>
</dbReference>
<dbReference type="SUPFAM" id="SSF54747">
    <property type="entry name" value="Ribosomal L11/L12e N-terminal domain"/>
    <property type="match status" value="1"/>
</dbReference>
<dbReference type="SUPFAM" id="SSF46906">
    <property type="entry name" value="Ribosomal protein L11, C-terminal domain"/>
    <property type="match status" value="1"/>
</dbReference>
<dbReference type="PROSITE" id="PS00359">
    <property type="entry name" value="RIBOSOMAL_L11"/>
    <property type="match status" value="1"/>
</dbReference>
<organism>
    <name type="scientific">Escherichia coli (strain ATCC 8739 / DSM 1576 / NBRC 3972 / NCIMB 8545 / WDCM 00012 / Crooks)</name>
    <dbReference type="NCBI Taxonomy" id="481805"/>
    <lineage>
        <taxon>Bacteria</taxon>
        <taxon>Pseudomonadati</taxon>
        <taxon>Pseudomonadota</taxon>
        <taxon>Gammaproteobacteria</taxon>
        <taxon>Enterobacterales</taxon>
        <taxon>Enterobacteriaceae</taxon>
        <taxon>Escherichia</taxon>
    </lineage>
</organism>
<reference key="1">
    <citation type="submission" date="2008-02" db="EMBL/GenBank/DDBJ databases">
        <title>Complete sequence of Escherichia coli C str. ATCC 8739.</title>
        <authorList>
            <person name="Copeland A."/>
            <person name="Lucas S."/>
            <person name="Lapidus A."/>
            <person name="Glavina del Rio T."/>
            <person name="Dalin E."/>
            <person name="Tice H."/>
            <person name="Bruce D."/>
            <person name="Goodwin L."/>
            <person name="Pitluck S."/>
            <person name="Kiss H."/>
            <person name="Brettin T."/>
            <person name="Detter J.C."/>
            <person name="Han C."/>
            <person name="Kuske C.R."/>
            <person name="Schmutz J."/>
            <person name="Larimer F."/>
            <person name="Land M."/>
            <person name="Hauser L."/>
            <person name="Kyrpides N."/>
            <person name="Mikhailova N."/>
            <person name="Ingram L."/>
            <person name="Richardson P."/>
        </authorList>
    </citation>
    <scope>NUCLEOTIDE SEQUENCE [LARGE SCALE GENOMIC DNA]</scope>
    <source>
        <strain>ATCC 8739 / DSM 1576 / NBRC 3972 / NCIMB 8545 / WDCM 00012 / Crooks</strain>
    </source>
</reference>
<protein>
    <recommendedName>
        <fullName evidence="1">Large ribosomal subunit protein uL11</fullName>
    </recommendedName>
    <alternativeName>
        <fullName evidence="2">50S ribosomal protein L11</fullName>
    </alternativeName>
</protein>
<keyword id="KW-0488">Methylation</keyword>
<keyword id="KW-0687">Ribonucleoprotein</keyword>
<keyword id="KW-0689">Ribosomal protein</keyword>
<keyword id="KW-0694">RNA-binding</keyword>
<keyword id="KW-0699">rRNA-binding</keyword>
<proteinExistence type="inferred from homology"/>
<gene>
    <name evidence="1" type="primary">rplK</name>
    <name type="ordered locus">EcolC_4042</name>
</gene>
<feature type="chain" id="PRO_1000083381" description="Large ribosomal subunit protein uL11">
    <location>
        <begin position="1"/>
        <end position="142"/>
    </location>
</feature>
<accession>B1IUR4</accession>
<name>RL11_ECOLC</name>
<evidence type="ECO:0000255" key="1">
    <source>
        <dbReference type="HAMAP-Rule" id="MF_00736"/>
    </source>
</evidence>
<evidence type="ECO:0000305" key="2"/>